<protein>
    <recommendedName>
        <fullName>L-lactate dehydrogenase A chain</fullName>
        <shortName>LDH-A</shortName>
        <ecNumber evidence="2">1.1.1.27</ecNumber>
    </recommendedName>
    <alternativeName>
        <fullName>LDH muscle subunit</fullName>
        <shortName>LDH-M</shortName>
    </alternativeName>
</protein>
<evidence type="ECO:0000250" key="1"/>
<evidence type="ECO:0000250" key="2">
    <source>
        <dbReference type="UniProtKB" id="P00338"/>
    </source>
</evidence>
<evidence type="ECO:0000250" key="3">
    <source>
        <dbReference type="UniProtKB" id="P06151"/>
    </source>
</evidence>
<evidence type="ECO:0000269" key="4">
    <source ref="3"/>
</evidence>
<evidence type="ECO:0000305" key="5"/>
<evidence type="ECO:0007744" key="6">
    <source>
    </source>
</evidence>
<evidence type="ECO:0007829" key="7">
    <source>
        <dbReference type="PDB" id="4AJ2"/>
    </source>
</evidence>
<comment type="function">
    <text evidence="2">Interconverts simultaneously and stereospecifically pyruvate and lactate with concomitant interconversion of NADH and NAD(+).</text>
</comment>
<comment type="catalytic activity">
    <reaction evidence="2">
        <text>(S)-lactate + NAD(+) = pyruvate + NADH + H(+)</text>
        <dbReference type="Rhea" id="RHEA:23444"/>
        <dbReference type="ChEBI" id="CHEBI:15361"/>
        <dbReference type="ChEBI" id="CHEBI:15378"/>
        <dbReference type="ChEBI" id="CHEBI:16651"/>
        <dbReference type="ChEBI" id="CHEBI:57540"/>
        <dbReference type="ChEBI" id="CHEBI:57945"/>
        <dbReference type="EC" id="1.1.1.27"/>
    </reaction>
    <physiologicalReaction direction="left-to-right" evidence="2">
        <dbReference type="Rhea" id="RHEA:23445"/>
    </physiologicalReaction>
    <physiologicalReaction direction="right-to-left" evidence="2">
        <dbReference type="Rhea" id="RHEA:23446"/>
    </physiologicalReaction>
</comment>
<comment type="pathway">
    <text evidence="2">Fermentation; pyruvate fermentation to lactate; (S)-lactate from pyruvate: step 1/1.</text>
</comment>
<comment type="subunit">
    <text evidence="2">Homotetramer. Interacts with PTEN upstream reading frame protein MP31.</text>
</comment>
<comment type="subcellular location">
    <subcellularLocation>
        <location>Cytoplasm</location>
    </subcellularLocation>
</comment>
<comment type="PTM">
    <text evidence="2">ISGylated.</text>
</comment>
<comment type="similarity">
    <text evidence="5">Belongs to the LDH/MDH superfamily. LDH family.</text>
</comment>
<feature type="initiator methionine" description="Removed" evidence="4">
    <location>
        <position position="1"/>
    </location>
</feature>
<feature type="chain" id="PRO_0000168419" description="L-lactate dehydrogenase A chain">
    <location>
        <begin position="2"/>
        <end position="332"/>
    </location>
</feature>
<feature type="active site" description="Proton acceptor" evidence="1">
    <location>
        <position position="193"/>
    </location>
</feature>
<feature type="binding site" evidence="1">
    <location>
        <begin position="29"/>
        <end position="57"/>
    </location>
    <ligand>
        <name>NAD(+)</name>
        <dbReference type="ChEBI" id="CHEBI:57540"/>
    </ligand>
</feature>
<feature type="binding site" evidence="1">
    <location>
        <position position="99"/>
    </location>
    <ligand>
        <name>NAD(+)</name>
        <dbReference type="ChEBI" id="CHEBI:57540"/>
    </ligand>
</feature>
<feature type="binding site" evidence="1">
    <location>
        <position position="106"/>
    </location>
    <ligand>
        <name>substrate</name>
    </ligand>
</feature>
<feature type="binding site" evidence="1">
    <location>
        <position position="138"/>
    </location>
    <ligand>
        <name>NAD(+)</name>
        <dbReference type="ChEBI" id="CHEBI:57540"/>
    </ligand>
</feature>
<feature type="binding site" evidence="1">
    <location>
        <position position="138"/>
    </location>
    <ligand>
        <name>substrate</name>
    </ligand>
</feature>
<feature type="binding site" evidence="1">
    <location>
        <position position="169"/>
    </location>
    <ligand>
        <name>substrate</name>
    </ligand>
</feature>
<feature type="binding site" evidence="1">
    <location>
        <position position="248"/>
    </location>
    <ligand>
        <name>substrate</name>
    </ligand>
</feature>
<feature type="modified residue" description="N-acetylalanine" evidence="4">
    <location>
        <position position="2"/>
    </location>
</feature>
<feature type="modified residue" description="N6-acetyllysine; alternate" evidence="2">
    <location>
        <position position="5"/>
    </location>
</feature>
<feature type="modified residue" description="N6-succinyllysine; alternate" evidence="3">
    <location>
        <position position="5"/>
    </location>
</feature>
<feature type="modified residue" description="N6-acetyllysine" evidence="2">
    <location>
        <position position="14"/>
    </location>
</feature>
<feature type="modified residue" description="N6-acetyllysine; alternate" evidence="2">
    <location>
        <position position="57"/>
    </location>
</feature>
<feature type="modified residue" description="N6-acetyllysine" evidence="2">
    <location>
        <position position="81"/>
    </location>
</feature>
<feature type="modified residue" description="N6-acetyllysine; alternate" evidence="2">
    <location>
        <position position="118"/>
    </location>
</feature>
<feature type="modified residue" description="N6-succinyllysine; alternate" evidence="3">
    <location>
        <position position="118"/>
    </location>
</feature>
<feature type="modified residue" description="N6-acetyllysine" evidence="2">
    <location>
        <position position="126"/>
    </location>
</feature>
<feature type="modified residue" description="Phosphoserine" evidence="6">
    <location>
        <position position="213"/>
    </location>
</feature>
<feature type="modified residue" description="N6-acetyllysine" evidence="3">
    <location>
        <position position="224"/>
    </location>
</feature>
<feature type="modified residue" description="N6-acetyllysine" evidence="3">
    <location>
        <position position="232"/>
    </location>
</feature>
<feature type="modified residue" description="Phosphotyrosine" evidence="6">
    <location>
        <position position="239"/>
    </location>
</feature>
<feature type="modified residue" description="N6-acetyllysine" evidence="3">
    <location>
        <position position="243"/>
    </location>
</feature>
<feature type="modified residue" description="Phosphothreonine" evidence="6">
    <location>
        <position position="309"/>
    </location>
</feature>
<feature type="modified residue" description="N6-acetyllysine; alternate" evidence="2">
    <location>
        <position position="318"/>
    </location>
</feature>
<feature type="modified residue" description="N6-succinyllysine; alternate" evidence="3">
    <location>
        <position position="318"/>
    </location>
</feature>
<feature type="modified residue" description="Phosphothreonine" evidence="6">
    <location>
        <position position="322"/>
    </location>
</feature>
<feature type="cross-link" description="Glycyl lysine isopeptide (Lys-Gly) (interchain with G-Cter in SUMO2); alternate" evidence="2">
    <location>
        <position position="57"/>
    </location>
</feature>
<feature type="sequence conflict" description="In Ref. 4; AA sequence." evidence="5" ref="4">
    <original>SCHGWVLG</original>
    <variation>ADLGEVV</variation>
    <location>
        <begin position="184"/>
        <end position="191"/>
    </location>
</feature>
<feature type="sequence conflict" description="In Ref. 5; AAA41508." evidence="5" ref="5">
    <original>W</original>
    <variation>G</variation>
    <location>
        <position position="324"/>
    </location>
</feature>
<feature type="sequence conflict" description="In Ref. 5; AAA41508." evidence="5" ref="5">
    <original>I</original>
    <variation>T</variation>
    <location>
        <position position="326"/>
    </location>
</feature>
<feature type="helix" evidence="7">
    <location>
        <begin position="4"/>
        <end position="8"/>
    </location>
</feature>
<feature type="strand" evidence="7">
    <location>
        <begin position="9"/>
        <end position="11"/>
    </location>
</feature>
<feature type="strand" evidence="7">
    <location>
        <begin position="20"/>
        <end position="26"/>
    </location>
</feature>
<feature type="helix" evidence="7">
    <location>
        <begin position="30"/>
        <end position="41"/>
    </location>
</feature>
<feature type="strand" evidence="7">
    <location>
        <begin position="46"/>
        <end position="51"/>
    </location>
</feature>
<feature type="helix" evidence="7">
    <location>
        <begin position="55"/>
        <end position="67"/>
    </location>
</feature>
<feature type="helix" evidence="7">
    <location>
        <begin position="68"/>
        <end position="71"/>
    </location>
</feature>
<feature type="strand" evidence="7">
    <location>
        <begin position="76"/>
        <end position="79"/>
    </location>
</feature>
<feature type="helix" evidence="7">
    <location>
        <begin position="83"/>
        <end position="86"/>
    </location>
</feature>
<feature type="strand" evidence="7">
    <location>
        <begin position="89"/>
        <end position="94"/>
    </location>
</feature>
<feature type="helix" evidence="7">
    <location>
        <begin position="106"/>
        <end position="109"/>
    </location>
</feature>
<feature type="helix" evidence="7">
    <location>
        <begin position="110"/>
        <end position="127"/>
    </location>
</feature>
<feature type="strand" evidence="7">
    <location>
        <begin position="132"/>
        <end position="135"/>
    </location>
</feature>
<feature type="strand" evidence="7">
    <location>
        <begin position="137"/>
        <end position="139"/>
    </location>
</feature>
<feature type="helix" evidence="7">
    <location>
        <begin position="140"/>
        <end position="151"/>
    </location>
</feature>
<feature type="helix" evidence="7">
    <location>
        <begin position="155"/>
        <end position="157"/>
    </location>
</feature>
<feature type="strand" evidence="7">
    <location>
        <begin position="158"/>
        <end position="160"/>
    </location>
</feature>
<feature type="helix" evidence="7">
    <location>
        <begin position="164"/>
        <end position="178"/>
    </location>
</feature>
<feature type="helix" evidence="7">
    <location>
        <begin position="182"/>
        <end position="184"/>
    </location>
</feature>
<feature type="strand" evidence="7">
    <location>
        <begin position="189"/>
        <end position="191"/>
    </location>
</feature>
<feature type="helix" evidence="7">
    <location>
        <begin position="201"/>
        <end position="203"/>
    </location>
</feature>
<feature type="helix" evidence="7">
    <location>
        <begin position="211"/>
        <end position="214"/>
    </location>
</feature>
<feature type="turn" evidence="7">
    <location>
        <begin position="216"/>
        <end position="219"/>
    </location>
</feature>
<feature type="helix" evidence="7">
    <location>
        <begin position="228"/>
        <end position="245"/>
    </location>
</feature>
<feature type="helix" evidence="7">
    <location>
        <begin position="250"/>
        <end position="264"/>
    </location>
</feature>
<feature type="strand" evidence="7">
    <location>
        <begin position="269"/>
        <end position="276"/>
    </location>
</feature>
<feature type="helix" evidence="7">
    <location>
        <begin position="280"/>
        <end position="282"/>
    </location>
</feature>
<feature type="strand" evidence="7">
    <location>
        <begin position="288"/>
        <end position="296"/>
    </location>
</feature>
<feature type="strand" evidence="7">
    <location>
        <begin position="299"/>
        <end position="304"/>
    </location>
</feature>
<feature type="helix" evidence="7">
    <location>
        <begin position="310"/>
        <end position="327"/>
    </location>
</feature>
<keyword id="KW-0002">3D-structure</keyword>
<keyword id="KW-0007">Acetylation</keyword>
<keyword id="KW-0963">Cytoplasm</keyword>
<keyword id="KW-0903">Direct protein sequencing</keyword>
<keyword id="KW-1017">Isopeptide bond</keyword>
<keyword id="KW-0520">NAD</keyword>
<keyword id="KW-0560">Oxidoreductase</keyword>
<keyword id="KW-0597">Phosphoprotein</keyword>
<keyword id="KW-1185">Reference proteome</keyword>
<keyword id="KW-0832">Ubl conjugation</keyword>
<name>LDHA_RAT</name>
<proteinExistence type="evidence at protein level"/>
<organism>
    <name type="scientific">Rattus norvegicus</name>
    <name type="common">Rat</name>
    <dbReference type="NCBI Taxonomy" id="10116"/>
    <lineage>
        <taxon>Eukaryota</taxon>
        <taxon>Metazoa</taxon>
        <taxon>Chordata</taxon>
        <taxon>Craniata</taxon>
        <taxon>Vertebrata</taxon>
        <taxon>Euteleostomi</taxon>
        <taxon>Mammalia</taxon>
        <taxon>Eutheria</taxon>
        <taxon>Euarchontoglires</taxon>
        <taxon>Glires</taxon>
        <taxon>Rodentia</taxon>
        <taxon>Myomorpha</taxon>
        <taxon>Muroidea</taxon>
        <taxon>Muridae</taxon>
        <taxon>Murinae</taxon>
        <taxon>Rattus</taxon>
    </lineage>
</organism>
<accession>P04642</accession>
<dbReference type="EC" id="1.1.1.27" evidence="2"/>
<dbReference type="EMBL" id="X01964">
    <property type="protein sequence ID" value="CAA26000.1"/>
    <property type="molecule type" value="mRNA"/>
</dbReference>
<dbReference type="EMBL" id="BC084698">
    <property type="protein sequence ID" value="AAH84698.1"/>
    <property type="molecule type" value="mRNA"/>
</dbReference>
<dbReference type="EMBL" id="M54926">
    <property type="protein sequence ID" value="AAA41508.1"/>
    <property type="molecule type" value="mRNA"/>
</dbReference>
<dbReference type="PIR" id="A23083">
    <property type="entry name" value="A23083"/>
</dbReference>
<dbReference type="RefSeq" id="NP_058721.1">
    <property type="nucleotide sequence ID" value="NM_017025.2"/>
</dbReference>
<dbReference type="PDB" id="4AJ1">
    <property type="method" value="X-ray"/>
    <property type="resolution" value="1.87 A"/>
    <property type="chains" value="A/B/C/D=2-332"/>
</dbReference>
<dbReference type="PDB" id="4AJ2">
    <property type="method" value="X-ray"/>
    <property type="resolution" value="1.75 A"/>
    <property type="chains" value="A/B/C/D=2-332"/>
</dbReference>
<dbReference type="PDB" id="4AJ4">
    <property type="method" value="X-ray"/>
    <property type="resolution" value="1.90 A"/>
    <property type="chains" value="A/B/C/D=1-332"/>
</dbReference>
<dbReference type="PDB" id="4AJE">
    <property type="method" value="X-ray"/>
    <property type="resolution" value="2.35 A"/>
    <property type="chains" value="A/B/C/D=2-332"/>
</dbReference>
<dbReference type="PDB" id="4AJH">
    <property type="method" value="X-ray"/>
    <property type="resolution" value="1.93 A"/>
    <property type="chains" value="A/B/C/D=2-332"/>
</dbReference>
<dbReference type="PDB" id="4AJI">
    <property type="method" value="X-ray"/>
    <property type="resolution" value="1.93 A"/>
    <property type="chains" value="A/B/C/D=2-332"/>
</dbReference>
<dbReference type="PDB" id="4AJJ">
    <property type="method" value="X-ray"/>
    <property type="resolution" value="1.75 A"/>
    <property type="chains" value="A/B/C/D=2-332"/>
</dbReference>
<dbReference type="PDB" id="4AJK">
    <property type="method" value="X-ray"/>
    <property type="resolution" value="2.03 A"/>
    <property type="chains" value="A/B/C/D=2-332"/>
</dbReference>
<dbReference type="PDB" id="4AJL">
    <property type="method" value="X-ray"/>
    <property type="resolution" value="1.77 A"/>
    <property type="chains" value="A/B/C/D=2-332"/>
</dbReference>
<dbReference type="PDB" id="4AJN">
    <property type="method" value="X-ray"/>
    <property type="resolution" value="2.10 A"/>
    <property type="chains" value="A/B/C/D=2-332"/>
</dbReference>
<dbReference type="PDB" id="4AJO">
    <property type="method" value="X-ray"/>
    <property type="resolution" value="1.96 A"/>
    <property type="chains" value="A/B/C/D=2-332"/>
</dbReference>
<dbReference type="PDB" id="4AL4">
    <property type="method" value="X-ray"/>
    <property type="resolution" value="1.78 A"/>
    <property type="chains" value="A/B/C/D=2-332"/>
</dbReference>
<dbReference type="PDB" id="5ES3">
    <property type="method" value="X-ray"/>
    <property type="resolution" value="2.29 A"/>
    <property type="chains" value="A/B/C/D/E/F/G/H=2-332"/>
</dbReference>
<dbReference type="PDBsum" id="4AJ1"/>
<dbReference type="PDBsum" id="4AJ2"/>
<dbReference type="PDBsum" id="4AJ4"/>
<dbReference type="PDBsum" id="4AJE"/>
<dbReference type="PDBsum" id="4AJH"/>
<dbReference type="PDBsum" id="4AJI"/>
<dbReference type="PDBsum" id="4AJJ"/>
<dbReference type="PDBsum" id="4AJK"/>
<dbReference type="PDBsum" id="4AJL"/>
<dbReference type="PDBsum" id="4AJN"/>
<dbReference type="PDBsum" id="4AJO"/>
<dbReference type="PDBsum" id="4AL4"/>
<dbReference type="PDBsum" id="5ES3"/>
<dbReference type="SMR" id="P04642"/>
<dbReference type="BioGRID" id="246686">
    <property type="interactions" value="8"/>
</dbReference>
<dbReference type="FunCoup" id="P04642">
    <property type="interactions" value="1157"/>
</dbReference>
<dbReference type="IntAct" id="P04642">
    <property type="interactions" value="8"/>
</dbReference>
<dbReference type="MINT" id="P04642"/>
<dbReference type="STRING" id="10116.ENSRNOP00000017468"/>
<dbReference type="BindingDB" id="P04642"/>
<dbReference type="ChEMBL" id="CHEMBL2176824"/>
<dbReference type="GlyGen" id="P04642">
    <property type="glycosylation" value="1 site, 1 O-linked glycan (1 site)"/>
</dbReference>
<dbReference type="iPTMnet" id="P04642"/>
<dbReference type="PhosphoSitePlus" id="P04642"/>
<dbReference type="SwissPalm" id="P04642"/>
<dbReference type="jPOST" id="P04642"/>
<dbReference type="PaxDb" id="10116-ENSRNOP00000017468"/>
<dbReference type="Ensembl" id="ENSRNOT00000017468.3">
    <property type="protein sequence ID" value="ENSRNOP00000017468.1"/>
    <property type="gene ID" value="ENSRNOG00000013009.3"/>
</dbReference>
<dbReference type="GeneID" id="24533"/>
<dbReference type="KEGG" id="rno:24533"/>
<dbReference type="AGR" id="RGD:2996"/>
<dbReference type="CTD" id="3939"/>
<dbReference type="RGD" id="2996">
    <property type="gene designation" value="Ldha"/>
</dbReference>
<dbReference type="eggNOG" id="KOG1495">
    <property type="taxonomic scope" value="Eukaryota"/>
</dbReference>
<dbReference type="GeneTree" id="ENSGT00940000153201"/>
<dbReference type="HOGENOM" id="CLU_045401_0_2_1"/>
<dbReference type="InParanoid" id="P04642"/>
<dbReference type="PhylomeDB" id="P04642"/>
<dbReference type="TreeFam" id="TF314963"/>
<dbReference type="BioCyc" id="MetaCyc:MONOMER-11604"/>
<dbReference type="Reactome" id="R-RNO-70268">
    <property type="pathway name" value="Pyruvate metabolism"/>
</dbReference>
<dbReference type="Reactome" id="R-RNO-9861718">
    <property type="pathway name" value="Regulation of pyruvate metabolism"/>
</dbReference>
<dbReference type="UniPathway" id="UPA00554">
    <property type="reaction ID" value="UER00611"/>
</dbReference>
<dbReference type="CD-CODE" id="246D7041">
    <property type="entry name" value="Chromatoid body"/>
</dbReference>
<dbReference type="EvolutionaryTrace" id="P04642"/>
<dbReference type="PRO" id="PR:P04642"/>
<dbReference type="Proteomes" id="UP000002494">
    <property type="component" value="Chromosome 1"/>
</dbReference>
<dbReference type="Bgee" id="ENSRNOG00000013009">
    <property type="expression patterns" value="Expressed in skeletal muscle tissue and 20 other cell types or tissues"/>
</dbReference>
<dbReference type="ExpressionAtlas" id="P04642">
    <property type="expression patterns" value="baseline and differential"/>
</dbReference>
<dbReference type="GO" id="GO:0005829">
    <property type="term" value="C:cytosol"/>
    <property type="evidence" value="ECO:0000266"/>
    <property type="project" value="RGD"/>
</dbReference>
<dbReference type="GO" id="GO:0005739">
    <property type="term" value="C:mitochondrion"/>
    <property type="evidence" value="ECO:0000318"/>
    <property type="project" value="GO_Central"/>
</dbReference>
<dbReference type="GO" id="GO:1990204">
    <property type="term" value="C:oxidoreductase complex"/>
    <property type="evidence" value="ECO:0000266"/>
    <property type="project" value="RGD"/>
</dbReference>
<dbReference type="GO" id="GO:0035686">
    <property type="term" value="C:sperm fibrous sheath"/>
    <property type="evidence" value="ECO:0000266"/>
    <property type="project" value="RGD"/>
</dbReference>
<dbReference type="GO" id="GO:0042802">
    <property type="term" value="F:identical protein binding"/>
    <property type="evidence" value="ECO:0000314"/>
    <property type="project" value="RGD"/>
</dbReference>
<dbReference type="GO" id="GO:0019900">
    <property type="term" value="F:kinase binding"/>
    <property type="evidence" value="ECO:0000353"/>
    <property type="project" value="RGD"/>
</dbReference>
<dbReference type="GO" id="GO:0004459">
    <property type="term" value="F:L-lactate dehydrogenase activity"/>
    <property type="evidence" value="ECO:0000314"/>
    <property type="project" value="RGD"/>
</dbReference>
<dbReference type="GO" id="GO:0004457">
    <property type="term" value="F:lactate dehydrogenase activity"/>
    <property type="evidence" value="ECO:0000314"/>
    <property type="project" value="RGD"/>
</dbReference>
<dbReference type="GO" id="GO:0051287">
    <property type="term" value="F:NAD binding"/>
    <property type="evidence" value="ECO:0000314"/>
    <property type="project" value="RGD"/>
</dbReference>
<dbReference type="GO" id="GO:1904628">
    <property type="term" value="P:cellular response to phorbol 13-acetate 12-myristate"/>
    <property type="evidence" value="ECO:0000270"/>
    <property type="project" value="RGD"/>
</dbReference>
<dbReference type="GO" id="GO:0019661">
    <property type="term" value="P:glucose catabolic process to lactate via pyruvate"/>
    <property type="evidence" value="ECO:0000266"/>
    <property type="project" value="RGD"/>
</dbReference>
<dbReference type="GO" id="GO:0006089">
    <property type="term" value="P:lactate metabolic process"/>
    <property type="evidence" value="ECO:0000314"/>
    <property type="project" value="RGD"/>
</dbReference>
<dbReference type="GO" id="GO:0001889">
    <property type="term" value="P:liver development"/>
    <property type="evidence" value="ECO:0000314"/>
    <property type="project" value="RGD"/>
</dbReference>
<dbReference type="GO" id="GO:0019674">
    <property type="term" value="P:NAD metabolic process"/>
    <property type="evidence" value="ECO:0000314"/>
    <property type="project" value="RGD"/>
</dbReference>
<dbReference type="GO" id="GO:0043065">
    <property type="term" value="P:positive regulation of apoptotic process"/>
    <property type="evidence" value="ECO:0000314"/>
    <property type="project" value="RGD"/>
</dbReference>
<dbReference type="GO" id="GO:0042867">
    <property type="term" value="P:pyruvate catabolic process"/>
    <property type="evidence" value="ECO:0000266"/>
    <property type="project" value="RGD"/>
</dbReference>
<dbReference type="GO" id="GO:0006090">
    <property type="term" value="P:pyruvate metabolic process"/>
    <property type="evidence" value="ECO:0000266"/>
    <property type="project" value="RGD"/>
</dbReference>
<dbReference type="GO" id="GO:0051591">
    <property type="term" value="P:response to cAMP"/>
    <property type="evidence" value="ECO:0000270"/>
    <property type="project" value="RGD"/>
</dbReference>
<dbReference type="GO" id="GO:0043627">
    <property type="term" value="P:response to estrogen"/>
    <property type="evidence" value="ECO:0000270"/>
    <property type="project" value="RGD"/>
</dbReference>
<dbReference type="GO" id="GO:0009749">
    <property type="term" value="P:response to glucose"/>
    <property type="evidence" value="ECO:0000270"/>
    <property type="project" value="RGD"/>
</dbReference>
<dbReference type="GO" id="GO:0042542">
    <property type="term" value="P:response to hydrogen peroxide"/>
    <property type="evidence" value="ECO:0000270"/>
    <property type="project" value="RGD"/>
</dbReference>
<dbReference type="GO" id="GO:0001666">
    <property type="term" value="P:response to hypoxia"/>
    <property type="evidence" value="ECO:0000270"/>
    <property type="project" value="RGD"/>
</dbReference>
<dbReference type="GO" id="GO:0007584">
    <property type="term" value="P:response to nutrient"/>
    <property type="evidence" value="ECO:0000270"/>
    <property type="project" value="RGD"/>
</dbReference>
<dbReference type="GO" id="GO:0009410">
    <property type="term" value="P:response to xenobiotic stimulus"/>
    <property type="evidence" value="ECO:0000270"/>
    <property type="project" value="RGD"/>
</dbReference>
<dbReference type="GO" id="GO:0007519">
    <property type="term" value="P:skeletal muscle tissue development"/>
    <property type="evidence" value="ECO:0000314"/>
    <property type="project" value="RGD"/>
</dbReference>
<dbReference type="CDD" id="cd05293">
    <property type="entry name" value="LDH_1"/>
    <property type="match status" value="1"/>
</dbReference>
<dbReference type="FunFam" id="3.40.50.720:FF:000029">
    <property type="entry name" value="L-lactate dehydrogenase A chain"/>
    <property type="match status" value="1"/>
</dbReference>
<dbReference type="FunFam" id="3.90.110.10:FF:000003">
    <property type="entry name" value="L-lactate dehydrogenase A chain"/>
    <property type="match status" value="1"/>
</dbReference>
<dbReference type="Gene3D" id="3.90.110.10">
    <property type="entry name" value="Lactate dehydrogenase/glycoside hydrolase, family 4, C-terminal"/>
    <property type="match status" value="1"/>
</dbReference>
<dbReference type="Gene3D" id="3.40.50.720">
    <property type="entry name" value="NAD(P)-binding Rossmann-like Domain"/>
    <property type="match status" value="1"/>
</dbReference>
<dbReference type="HAMAP" id="MF_00488">
    <property type="entry name" value="Lactate_dehydrog"/>
    <property type="match status" value="1"/>
</dbReference>
<dbReference type="InterPro" id="IPR001557">
    <property type="entry name" value="L-lactate/malate_DH"/>
</dbReference>
<dbReference type="InterPro" id="IPR011304">
    <property type="entry name" value="L-lactate_DH"/>
</dbReference>
<dbReference type="InterPro" id="IPR018177">
    <property type="entry name" value="L-lactate_DH_AS"/>
</dbReference>
<dbReference type="InterPro" id="IPR022383">
    <property type="entry name" value="Lactate/malate_DH_C"/>
</dbReference>
<dbReference type="InterPro" id="IPR001236">
    <property type="entry name" value="Lactate/malate_DH_N"/>
</dbReference>
<dbReference type="InterPro" id="IPR015955">
    <property type="entry name" value="Lactate_DH/Glyco_Ohase_4_C"/>
</dbReference>
<dbReference type="InterPro" id="IPR036291">
    <property type="entry name" value="NAD(P)-bd_dom_sf"/>
</dbReference>
<dbReference type="NCBIfam" id="TIGR01771">
    <property type="entry name" value="L-LDH-NAD"/>
    <property type="match status" value="1"/>
</dbReference>
<dbReference type="NCBIfam" id="NF000824">
    <property type="entry name" value="PRK00066.1"/>
    <property type="match status" value="1"/>
</dbReference>
<dbReference type="PANTHER" id="PTHR43128">
    <property type="entry name" value="L-2-HYDROXYCARBOXYLATE DEHYDROGENASE (NAD(P)(+))"/>
    <property type="match status" value="1"/>
</dbReference>
<dbReference type="PANTHER" id="PTHR43128:SF10">
    <property type="entry name" value="L-LACTATE DEHYDROGENASE A CHAIN"/>
    <property type="match status" value="1"/>
</dbReference>
<dbReference type="Pfam" id="PF02866">
    <property type="entry name" value="Ldh_1_C"/>
    <property type="match status" value="1"/>
</dbReference>
<dbReference type="Pfam" id="PF00056">
    <property type="entry name" value="Ldh_1_N"/>
    <property type="match status" value="1"/>
</dbReference>
<dbReference type="PIRSF" id="PIRSF000102">
    <property type="entry name" value="Lac_mal_DH"/>
    <property type="match status" value="1"/>
</dbReference>
<dbReference type="PRINTS" id="PR00086">
    <property type="entry name" value="LLDHDRGNASE"/>
</dbReference>
<dbReference type="SUPFAM" id="SSF56327">
    <property type="entry name" value="LDH C-terminal domain-like"/>
    <property type="match status" value="1"/>
</dbReference>
<dbReference type="SUPFAM" id="SSF51735">
    <property type="entry name" value="NAD(P)-binding Rossmann-fold domains"/>
    <property type="match status" value="1"/>
</dbReference>
<dbReference type="PROSITE" id="PS00064">
    <property type="entry name" value="L_LDH"/>
    <property type="match status" value="1"/>
</dbReference>
<gene>
    <name type="primary">Ldha</name>
    <name type="synonym">Ldh-1</name>
    <name type="synonym">Ldh1</name>
</gene>
<sequence>MAALKDQLIVNLLKEEQVPQNKITVVGVGAVGMACAISILMKDLADELALVDVIEDKLKGEMMDLQHGSLFLKTPKIVSSKDYSVTANSKLVIITAGARQQEGESRLNLVQRNVNIFKFIIPNVVKYSPQCKLLIVSNPVDILTYVAWKISGFPKNRVIGSGCNLDSARFRYLMGERLGVHPLSCHGWVLGEHGDSSVPVWSGVNVAGVSLKSLNPQLGTDADKEQWKDVHKQVVDSAYEVIKLKGYTSWAIGLSVADLAESIMKNLRRVHPISTMIKGLYGIKEDVFLSVPCILGQNGISDVVKVTLTPDEEARLKKSADTLWGIQKELQF</sequence>
<reference key="1">
    <citation type="journal article" date="1985" name="Nucleic Acids Res.">
        <title>Epidermal growth factor or serum stimulation of rat fibroblasts induces an elevation in mRNA levels for lactate dehydrogenase and other glycolytic enzymes.</title>
        <authorList>
            <person name="Matrisian L.M."/>
            <person name="Rautmann G."/>
            <person name="Magun B.E."/>
            <person name="Breathnach R."/>
        </authorList>
    </citation>
    <scope>NUCLEOTIDE SEQUENCE [MRNA]</scope>
</reference>
<reference key="2">
    <citation type="journal article" date="2004" name="Genome Res.">
        <title>The status, quality, and expansion of the NIH full-length cDNA project: the Mammalian Gene Collection (MGC).</title>
        <authorList>
            <consortium name="The MGC Project Team"/>
        </authorList>
    </citation>
    <scope>NUCLEOTIDE SEQUENCE [LARGE SCALE MRNA]</scope>
    <source>
        <tissue>Lung</tissue>
    </source>
</reference>
<reference key="3">
    <citation type="submission" date="2009-06" db="UniProtKB">
        <authorList>
            <person name="Bienvenut W.V."/>
            <person name="von Kriegsheim A.F."/>
            <person name="Kolch W."/>
        </authorList>
    </citation>
    <scope>PROTEIN SEQUENCE OF 2-14; 43-57; 91-99; 107-112; 119-126; 233-243; 306-315 AND 319-328</scope>
    <scope>CLEAVAGE OF INITIATOR METHIONINE</scope>
    <scope>ACETYLATION AT ALA-2</scope>
    <scope>IDENTIFICATION BY MASS SPECTROMETRY</scope>
    <source>
        <tissue>Fibroblast</tissue>
        <tissue>Pheochromocytoma</tissue>
    </source>
</reference>
<reference key="4">
    <citation type="journal article" date="1985" name="Proc. Natl. Acad. Sci. U.S.A.">
        <title>Identification of a nucleic acid helix-destabilizing protein from rat liver as lactate dehydrogenase-5.</title>
        <authorList>
            <person name="Williams K.R."/>
            <person name="Reddigari S."/>
            <person name="Patel G.L."/>
        </authorList>
    </citation>
    <scope>PROTEIN SEQUENCE OF 82-99; 127-132; 156-157; 170-190; 234-245; 306-315 AND 319-328</scope>
</reference>
<reference key="5">
    <citation type="journal article" date="1987" name="J. Microbiol.">
        <title>Characterization of the folding structure of 3'-end of lactate dehydrogenase A-mRNA isolated from hormone stimulated rat C-6 glioma cell culture.</title>
        <authorList>
            <person name="Bae S.C."/>
            <person name="Lee S.K."/>
        </authorList>
    </citation>
    <scope>NUCLEOTIDE SEQUENCE [MRNA] OF 274-332</scope>
    <source>
        <tissue>Liver</tissue>
    </source>
</reference>
<reference key="6">
    <citation type="submission" date="2006-09" db="UniProtKB">
        <authorList>
            <person name="Lubec G."/>
            <person name="Chen W.-Q."/>
        </authorList>
    </citation>
    <scope>PROTEIN SEQUENCE OF 319-328</scope>
    <scope>IDENTIFICATION BY MASS SPECTROMETRY</scope>
</reference>
<reference key="7">
    <citation type="journal article" date="2012" name="Nat. Commun.">
        <title>Quantitative maps of protein phosphorylation sites across 14 different rat organs and tissues.</title>
        <authorList>
            <person name="Lundby A."/>
            <person name="Secher A."/>
            <person name="Lage K."/>
            <person name="Nordsborg N.B."/>
            <person name="Dmytriyev A."/>
            <person name="Lundby C."/>
            <person name="Olsen J.V."/>
        </authorList>
    </citation>
    <scope>PHOSPHORYLATION [LARGE SCALE ANALYSIS] AT SER-213; TYR-239; THR-309 AND THR-322</scope>
    <scope>IDENTIFICATION BY MASS SPECTROMETRY [LARGE SCALE ANALYSIS]</scope>
</reference>